<reference key="1">
    <citation type="submission" date="2005-08" db="EMBL/GenBank/DDBJ databases">
        <authorList>
            <consortium name="NIH - Mammalian Gene Collection (MGC) project"/>
        </authorList>
    </citation>
    <scope>NUCLEOTIDE SEQUENCE [LARGE SCALE MRNA]</scope>
    <source>
        <strain>Hereford</strain>
        <tissue>Uterus</tissue>
    </source>
</reference>
<accession>Q3SYZ6</accession>
<evidence type="ECO:0000250" key="1"/>
<evidence type="ECO:0000305" key="2"/>
<organism>
    <name type="scientific">Bos taurus</name>
    <name type="common">Bovine</name>
    <dbReference type="NCBI Taxonomy" id="9913"/>
    <lineage>
        <taxon>Eukaryota</taxon>
        <taxon>Metazoa</taxon>
        <taxon>Chordata</taxon>
        <taxon>Craniata</taxon>
        <taxon>Vertebrata</taxon>
        <taxon>Euteleostomi</taxon>
        <taxon>Mammalia</taxon>
        <taxon>Eutheria</taxon>
        <taxon>Laurasiatheria</taxon>
        <taxon>Artiodactyla</taxon>
        <taxon>Ruminantia</taxon>
        <taxon>Pecora</taxon>
        <taxon>Bovidae</taxon>
        <taxon>Bovinae</taxon>
        <taxon>Bos</taxon>
    </lineage>
</organism>
<comment type="function">
    <text evidence="1">Phosphorylates D-xylulose to produce D-xylulose 5-phosphate, a molecule that may play an important role in the regulation of glucose metabolism and lipogenesis.</text>
</comment>
<comment type="catalytic activity">
    <reaction>
        <text>D-xylulose + ATP = D-xylulose 5-phosphate + ADP + H(+)</text>
        <dbReference type="Rhea" id="RHEA:10964"/>
        <dbReference type="ChEBI" id="CHEBI:15378"/>
        <dbReference type="ChEBI" id="CHEBI:17140"/>
        <dbReference type="ChEBI" id="CHEBI:30616"/>
        <dbReference type="ChEBI" id="CHEBI:57737"/>
        <dbReference type="ChEBI" id="CHEBI:456216"/>
        <dbReference type="EC" id="2.7.1.17"/>
    </reaction>
</comment>
<comment type="subunit">
    <text evidence="1">Monomer.</text>
</comment>
<comment type="similarity">
    <text evidence="2">Belongs to the FGGY kinase family.</text>
</comment>
<proteinExistence type="evidence at transcript level"/>
<gene>
    <name type="primary">XYLB</name>
</gene>
<feature type="chain" id="PRO_0000230984" description="Xylulose kinase">
    <location>
        <begin position="1"/>
        <end position="490"/>
    </location>
</feature>
<feature type="binding site" evidence="1">
    <location>
        <position position="99"/>
    </location>
    <ligand>
        <name>substrate</name>
    </ligand>
</feature>
<feature type="binding site" evidence="1">
    <location>
        <position position="170"/>
    </location>
    <ligand>
        <name>substrate</name>
    </ligand>
</feature>
<feature type="binding site" evidence="1">
    <location>
        <position position="280"/>
    </location>
    <ligand>
        <name>substrate</name>
    </ligand>
</feature>
<feature type="binding site" evidence="1">
    <location>
        <position position="281"/>
    </location>
    <ligand>
        <name>substrate</name>
    </ligand>
</feature>
<feature type="binding site" evidence="1">
    <location>
        <position position="355"/>
    </location>
    <ligand>
        <name>ATP</name>
        <dbReference type="ChEBI" id="CHEBI:30616"/>
    </ligand>
</feature>
<feature type="binding site" evidence="1">
    <location>
        <begin position="441"/>
        <end position="442"/>
    </location>
    <ligand>
        <name>ATP</name>
        <dbReference type="ChEBI" id="CHEBI:30616"/>
    </ligand>
</feature>
<feature type="binding site" evidence="1">
    <location>
        <position position="445"/>
    </location>
    <ligand>
        <name>ATP</name>
        <dbReference type="ChEBI" id="CHEBI:30616"/>
    </ligand>
</feature>
<dbReference type="EC" id="2.7.1.17"/>
<dbReference type="EMBL" id="BC103316">
    <property type="protein sequence ID" value="AAI03317.1"/>
    <property type="molecule type" value="mRNA"/>
</dbReference>
<dbReference type="RefSeq" id="NP_001029655.1">
    <property type="nucleotide sequence ID" value="NM_001034483.1"/>
</dbReference>
<dbReference type="SMR" id="Q3SYZ6"/>
<dbReference type="FunCoup" id="Q3SYZ6">
    <property type="interactions" value="1632"/>
</dbReference>
<dbReference type="STRING" id="9913.ENSBTAP00000057700"/>
<dbReference type="PaxDb" id="9913-ENSBTAP00000030820"/>
<dbReference type="PeptideAtlas" id="Q3SYZ6"/>
<dbReference type="GeneID" id="515146"/>
<dbReference type="KEGG" id="bta:515146"/>
<dbReference type="CTD" id="9942"/>
<dbReference type="VEuPathDB" id="HostDB:ENSBTAG00000011278"/>
<dbReference type="eggNOG" id="KOG2531">
    <property type="taxonomic scope" value="Eukaryota"/>
</dbReference>
<dbReference type="HOGENOM" id="CLU_016149_8_0_1"/>
<dbReference type="InParanoid" id="Q3SYZ6"/>
<dbReference type="OrthoDB" id="1728974at2759"/>
<dbReference type="TreeFam" id="TF313643"/>
<dbReference type="BioCyc" id="MetaCyc:MONOMER-13243"/>
<dbReference type="Reactome" id="R-BTA-5661270">
    <property type="pathway name" value="Formation of xylulose-5-phosphate"/>
</dbReference>
<dbReference type="Proteomes" id="UP000009136">
    <property type="component" value="Chromosome 22"/>
</dbReference>
<dbReference type="Bgee" id="ENSBTAG00000011278">
    <property type="expression patterns" value="Expressed in liver and 103 other cell types or tissues"/>
</dbReference>
<dbReference type="GO" id="GO:0005829">
    <property type="term" value="C:cytosol"/>
    <property type="evidence" value="ECO:0000318"/>
    <property type="project" value="GO_Central"/>
</dbReference>
<dbReference type="GO" id="GO:0005524">
    <property type="term" value="F:ATP binding"/>
    <property type="evidence" value="ECO:0007669"/>
    <property type="project" value="UniProtKB-KW"/>
</dbReference>
<dbReference type="GO" id="GO:0004856">
    <property type="term" value="F:D-xylulokinase activity"/>
    <property type="evidence" value="ECO:0000250"/>
    <property type="project" value="UniProtKB"/>
</dbReference>
<dbReference type="GO" id="GO:0042732">
    <property type="term" value="P:D-xylose metabolic process"/>
    <property type="evidence" value="ECO:0007669"/>
    <property type="project" value="UniProtKB-KW"/>
</dbReference>
<dbReference type="GO" id="GO:0005997">
    <property type="term" value="P:xylulose metabolic process"/>
    <property type="evidence" value="ECO:0000250"/>
    <property type="project" value="UniProtKB"/>
</dbReference>
<dbReference type="CDD" id="cd07776">
    <property type="entry name" value="ASKHA_NBD_FGGY_SpXK-like"/>
    <property type="match status" value="1"/>
</dbReference>
<dbReference type="FunFam" id="3.30.420.40:FF:000126">
    <property type="entry name" value="Xylulose kinase"/>
    <property type="match status" value="1"/>
</dbReference>
<dbReference type="Gene3D" id="3.30.420.40">
    <property type="match status" value="2"/>
</dbReference>
<dbReference type="InterPro" id="IPR043129">
    <property type="entry name" value="ATPase_NBD"/>
</dbReference>
<dbReference type="InterPro" id="IPR000577">
    <property type="entry name" value="Carb_kinase_FGGY"/>
</dbReference>
<dbReference type="InterPro" id="IPR042024">
    <property type="entry name" value="D-XK_euk"/>
</dbReference>
<dbReference type="InterPro" id="IPR018485">
    <property type="entry name" value="FGGY_C"/>
</dbReference>
<dbReference type="InterPro" id="IPR018484">
    <property type="entry name" value="FGGY_N"/>
</dbReference>
<dbReference type="PANTHER" id="PTHR10196">
    <property type="entry name" value="SUGAR KINASE"/>
    <property type="match status" value="1"/>
</dbReference>
<dbReference type="PANTHER" id="PTHR10196:SF57">
    <property type="entry name" value="XYLULOSE KINASE"/>
    <property type="match status" value="1"/>
</dbReference>
<dbReference type="Pfam" id="PF02782">
    <property type="entry name" value="FGGY_C"/>
    <property type="match status" value="1"/>
</dbReference>
<dbReference type="Pfam" id="PF00370">
    <property type="entry name" value="FGGY_N"/>
    <property type="match status" value="1"/>
</dbReference>
<dbReference type="PIRSF" id="PIRSF000538">
    <property type="entry name" value="GlpK"/>
    <property type="match status" value="1"/>
</dbReference>
<dbReference type="SUPFAM" id="SSF53067">
    <property type="entry name" value="Actin-like ATPase domain"/>
    <property type="match status" value="2"/>
</dbReference>
<keyword id="KW-0067">ATP-binding</keyword>
<keyword id="KW-0119">Carbohydrate metabolism</keyword>
<keyword id="KW-0418">Kinase</keyword>
<keyword id="KW-0547">Nucleotide-binding</keyword>
<keyword id="KW-1185">Reference proteome</keyword>
<keyword id="KW-0808">Transferase</keyword>
<keyword id="KW-0859">Xylose metabolism</keyword>
<name>XYLB_BOVIN</name>
<sequence length="490" mass="53305">MAERAARHCCLGWDFSTQQVKVVAVDAELSVFYEDSVHFDRDLVEFGTQGGVHVHKDGLTVTSPVLMWVQALDIILEKMKASGFDFSQVLALSGAGQQHGSVYWKTGASQVLTSLSPDLPLREQLQACFSISNCPVWMDSSTAAQCRQLEAAVGGAQALSLLTGSRAYERFTGNQIAKIYQQNPEAYSHTERISLVSSFAASLFLGSYSPVDYSDGSGMNLLQIQDKVWSQACLGACAPRLEEKLGRPVPSCSIVGAISSYFVQRYGFPPECKVVAFTGDNPASLAGMRLEEGDIAVSLGTSDTLFLWLQEPTPALEGHIFCNPVDPQHYMALLCFKNGSLMREKIRDESASGSWSKFSKALQSTGMGNSGNLGFYFDVMEITPEIIGRHRFTAENHEVSAFPQDVEIRALIEGQFMAKKIHAEALGYRVMPKTKILATGGASHNRDILQVLADVFGAPVYVIDTANSACVGSAYRAFHGPSLLCLVSIY</sequence>
<protein>
    <recommendedName>
        <fullName>Xylulose kinase</fullName>
        <shortName>Xylulokinase</shortName>
        <ecNumber>2.7.1.17</ecNumber>
    </recommendedName>
</protein>